<accession>Q6LTV9</accession>
<comment type="function">
    <text evidence="1">Catalytic subunit of the periplasmic nitrate reductase complex NapAB. Receives electrons from NapB and catalyzes the reduction of nitrate to nitrite.</text>
</comment>
<comment type="catalytic activity">
    <reaction evidence="1">
        <text>2 Fe(II)-[cytochrome] + nitrate + 2 H(+) = 2 Fe(III)-[cytochrome] + nitrite + H2O</text>
        <dbReference type="Rhea" id="RHEA:12909"/>
        <dbReference type="Rhea" id="RHEA-COMP:11777"/>
        <dbReference type="Rhea" id="RHEA-COMP:11778"/>
        <dbReference type="ChEBI" id="CHEBI:15377"/>
        <dbReference type="ChEBI" id="CHEBI:15378"/>
        <dbReference type="ChEBI" id="CHEBI:16301"/>
        <dbReference type="ChEBI" id="CHEBI:17632"/>
        <dbReference type="ChEBI" id="CHEBI:29033"/>
        <dbReference type="ChEBI" id="CHEBI:29034"/>
        <dbReference type="EC" id="1.9.6.1"/>
    </reaction>
</comment>
<comment type="cofactor">
    <cofactor evidence="1">
        <name>[4Fe-4S] cluster</name>
        <dbReference type="ChEBI" id="CHEBI:49883"/>
    </cofactor>
    <text evidence="1">Binds 1 [4Fe-4S] cluster.</text>
</comment>
<comment type="cofactor">
    <cofactor evidence="1">
        <name>Mo-bis(molybdopterin guanine dinucleotide)</name>
        <dbReference type="ChEBI" id="CHEBI:60539"/>
    </cofactor>
    <text evidence="1">Binds 1 molybdenum-bis(molybdopterin guanine dinucleotide) (Mo-bis-MGD) cofactor per subunit.</text>
</comment>
<comment type="subunit">
    <text evidence="1">Component of the periplasmic nitrate reductase NapAB complex composed of NapA and NapB.</text>
</comment>
<comment type="subcellular location">
    <subcellularLocation>
        <location evidence="1">Periplasm</location>
    </subcellularLocation>
</comment>
<comment type="PTM">
    <text evidence="1">Predicted to be exported by the Tat system. The position of the signal peptide cleavage has not been experimentally proven.</text>
</comment>
<comment type="similarity">
    <text evidence="1">Belongs to the prokaryotic molybdopterin-containing oxidoreductase family. NasA/NapA/NarB subfamily.</text>
</comment>
<keyword id="KW-0004">4Fe-4S</keyword>
<keyword id="KW-0249">Electron transport</keyword>
<keyword id="KW-0408">Iron</keyword>
<keyword id="KW-0411">Iron-sulfur</keyword>
<keyword id="KW-0479">Metal-binding</keyword>
<keyword id="KW-0500">Molybdenum</keyword>
<keyword id="KW-0534">Nitrate assimilation</keyword>
<keyword id="KW-0560">Oxidoreductase</keyword>
<keyword id="KW-0574">Periplasm</keyword>
<keyword id="KW-1185">Reference proteome</keyword>
<keyword id="KW-0732">Signal</keyword>
<keyword id="KW-0813">Transport</keyword>
<evidence type="ECO:0000255" key="1">
    <source>
        <dbReference type="HAMAP-Rule" id="MF_01630"/>
    </source>
</evidence>
<name>NAPA1_PHOPR</name>
<sequence length="828" mass="93366">MKMTRRAFVKANAAASAAAVAGITLPASAANLIVSSDETKIKWDKAPCRFCGTGCSVLVGTQNGRVVATQGDPEAPVNKGLNCIKGYFLSKIMYGKDRLQTPMLRMKNGEYNKEGDFAPVSWDQAFDVMAEKFKKALKEKGPTSVGMFGSGQWTVMEGYAASKMMKAGFRSNNIDPNARHCMASAVGGFMRTFGIDEPMGCYDDFEHADSFVLWGSNMAEMHPVLWTRITDRRLSHPHVKVNVLSTYYHRSFELADNGMIFEPQTDLAIANFIANYIIQNDAVNWDFVTKHTHFKRAETDIGYGLRDDNPLQMKAKHPNSGALHPMDFEQYKASVAEYTVEKASQMSGVSEEKLIEMAKQYADPKVKVMSLWTMGMNQHTRGVWMNSLVYNIHLLTGKISQPGNSPFSLTGQPSACGTAREVGTFSHRLPADMVVANPKHRAIAEKIWKLPDGTIPAKPGYHAVQQDRMLKDGKLNAYWVMCNNNMQAGPNINEERLPGYRNPENFIVCSDPYPTVTAQASDLILPTAMWVEKEGAYGNAERRTQAWYQQVKSQGDSKSDLWQLMEFSKRFKIEEVWGEDLLAQMPEYRGKTMYEVLFRNGQVDKFPLSEAQELNDDAKAQGFYLQKGLFEEYAAFGRGHGHDLAPYDVYHQVRGLRWPVVDGKETLWRFVEGSDPYVPEGEGFRFYGKPDGKANIIFAPFEPAPEEPDQEYDMWLCTGRVLEHWHTGTMTRRVPELYKAVPDALCFIHPDDAQKRGLRRGDEVLLESRRGEVRCRVETRGRNRPPVGLVFVPFFDARVLVNKLILDATDPLSKQTDYKKCPIKITKV</sequence>
<feature type="signal peptide" description="Tat-type signal" evidence="1">
    <location>
        <begin position="1"/>
        <end position="30"/>
    </location>
</feature>
<feature type="chain" id="PRO_0000045993" description="Periplasmic nitrate reductase 1" evidence="1">
    <location>
        <begin position="31"/>
        <end position="828"/>
    </location>
</feature>
<feature type="domain" description="4Fe-4S Mo/W bis-MGD-type" evidence="1">
    <location>
        <begin position="41"/>
        <end position="97"/>
    </location>
</feature>
<feature type="binding site" evidence="1">
    <location>
        <position position="48"/>
    </location>
    <ligand>
        <name>[4Fe-4S] cluster</name>
        <dbReference type="ChEBI" id="CHEBI:49883"/>
    </ligand>
</feature>
<feature type="binding site" evidence="1">
    <location>
        <position position="51"/>
    </location>
    <ligand>
        <name>[4Fe-4S] cluster</name>
        <dbReference type="ChEBI" id="CHEBI:49883"/>
    </ligand>
</feature>
<feature type="binding site" evidence="1">
    <location>
        <position position="55"/>
    </location>
    <ligand>
        <name>[4Fe-4S] cluster</name>
        <dbReference type="ChEBI" id="CHEBI:49883"/>
    </ligand>
</feature>
<feature type="binding site" evidence="1">
    <location>
        <position position="83"/>
    </location>
    <ligand>
        <name>[4Fe-4S] cluster</name>
        <dbReference type="ChEBI" id="CHEBI:49883"/>
    </ligand>
</feature>
<feature type="binding site" evidence="1">
    <location>
        <position position="85"/>
    </location>
    <ligand>
        <name>Mo-bis(molybdopterin guanine dinucleotide)</name>
        <dbReference type="ChEBI" id="CHEBI:60539"/>
    </ligand>
</feature>
<feature type="binding site" evidence="1">
    <location>
        <position position="152"/>
    </location>
    <ligand>
        <name>Mo-bis(molybdopterin guanine dinucleotide)</name>
        <dbReference type="ChEBI" id="CHEBI:60539"/>
    </ligand>
</feature>
<feature type="binding site" evidence="1">
    <location>
        <position position="177"/>
    </location>
    <ligand>
        <name>Mo-bis(molybdopterin guanine dinucleotide)</name>
        <dbReference type="ChEBI" id="CHEBI:60539"/>
    </ligand>
</feature>
<feature type="binding site" evidence="1">
    <location>
        <position position="181"/>
    </location>
    <ligand>
        <name>Mo-bis(molybdopterin guanine dinucleotide)</name>
        <dbReference type="ChEBI" id="CHEBI:60539"/>
    </ligand>
</feature>
<feature type="binding site" evidence="1">
    <location>
        <begin position="214"/>
        <end position="221"/>
    </location>
    <ligand>
        <name>Mo-bis(molybdopterin guanine dinucleotide)</name>
        <dbReference type="ChEBI" id="CHEBI:60539"/>
    </ligand>
</feature>
<feature type="binding site" evidence="1">
    <location>
        <begin position="245"/>
        <end position="249"/>
    </location>
    <ligand>
        <name>Mo-bis(molybdopterin guanine dinucleotide)</name>
        <dbReference type="ChEBI" id="CHEBI:60539"/>
    </ligand>
</feature>
<feature type="binding site" evidence="1">
    <location>
        <begin position="264"/>
        <end position="266"/>
    </location>
    <ligand>
        <name>Mo-bis(molybdopterin guanine dinucleotide)</name>
        <dbReference type="ChEBI" id="CHEBI:60539"/>
    </ligand>
</feature>
<feature type="binding site" evidence="1">
    <location>
        <position position="374"/>
    </location>
    <ligand>
        <name>Mo-bis(molybdopterin guanine dinucleotide)</name>
        <dbReference type="ChEBI" id="CHEBI:60539"/>
    </ligand>
</feature>
<feature type="binding site" evidence="1">
    <location>
        <position position="378"/>
    </location>
    <ligand>
        <name>Mo-bis(molybdopterin guanine dinucleotide)</name>
        <dbReference type="ChEBI" id="CHEBI:60539"/>
    </ligand>
</feature>
<feature type="binding site" evidence="1">
    <location>
        <position position="484"/>
    </location>
    <ligand>
        <name>Mo-bis(molybdopterin guanine dinucleotide)</name>
        <dbReference type="ChEBI" id="CHEBI:60539"/>
    </ligand>
</feature>
<feature type="binding site" evidence="1">
    <location>
        <begin position="510"/>
        <end position="511"/>
    </location>
    <ligand>
        <name>Mo-bis(molybdopterin guanine dinucleotide)</name>
        <dbReference type="ChEBI" id="CHEBI:60539"/>
    </ligand>
</feature>
<feature type="binding site" evidence="1">
    <location>
        <position position="533"/>
    </location>
    <ligand>
        <name>Mo-bis(molybdopterin guanine dinucleotide)</name>
        <dbReference type="ChEBI" id="CHEBI:60539"/>
    </ligand>
</feature>
<feature type="binding site" evidence="1">
    <location>
        <position position="560"/>
    </location>
    <ligand>
        <name>Mo-bis(molybdopterin guanine dinucleotide)</name>
        <dbReference type="ChEBI" id="CHEBI:60539"/>
    </ligand>
</feature>
<feature type="binding site" evidence="1">
    <location>
        <begin position="718"/>
        <end position="727"/>
    </location>
    <ligand>
        <name>Mo-bis(molybdopterin guanine dinucleotide)</name>
        <dbReference type="ChEBI" id="CHEBI:60539"/>
    </ligand>
</feature>
<feature type="binding site" evidence="1">
    <location>
        <position position="794"/>
    </location>
    <ligand>
        <name>substrate</name>
    </ligand>
</feature>
<feature type="binding site" evidence="1">
    <location>
        <position position="802"/>
    </location>
    <ligand>
        <name>Mo-bis(molybdopterin guanine dinucleotide)</name>
        <dbReference type="ChEBI" id="CHEBI:60539"/>
    </ligand>
</feature>
<feature type="binding site" evidence="1">
    <location>
        <position position="819"/>
    </location>
    <ligand>
        <name>Mo-bis(molybdopterin guanine dinucleotide)</name>
        <dbReference type="ChEBI" id="CHEBI:60539"/>
    </ligand>
</feature>
<protein>
    <recommendedName>
        <fullName evidence="1">Periplasmic nitrate reductase 1</fullName>
        <ecNumber evidence="1">1.9.6.1</ecNumber>
    </recommendedName>
</protein>
<organism>
    <name type="scientific">Photobacterium profundum (strain SS9)</name>
    <dbReference type="NCBI Taxonomy" id="298386"/>
    <lineage>
        <taxon>Bacteria</taxon>
        <taxon>Pseudomonadati</taxon>
        <taxon>Pseudomonadota</taxon>
        <taxon>Gammaproteobacteria</taxon>
        <taxon>Vibrionales</taxon>
        <taxon>Vibrionaceae</taxon>
        <taxon>Photobacterium</taxon>
    </lineage>
</organism>
<dbReference type="EC" id="1.9.6.1" evidence="1"/>
<dbReference type="EMBL" id="CR378665">
    <property type="protein sequence ID" value="CAG19266.1"/>
    <property type="molecule type" value="Genomic_DNA"/>
</dbReference>
<dbReference type="RefSeq" id="WP_011217603.1">
    <property type="nucleotide sequence ID" value="NC_006370.1"/>
</dbReference>
<dbReference type="SMR" id="Q6LTV9"/>
<dbReference type="STRING" id="298386.PBPRA0853"/>
<dbReference type="KEGG" id="ppr:PBPRA0853"/>
<dbReference type="eggNOG" id="COG0243">
    <property type="taxonomic scope" value="Bacteria"/>
</dbReference>
<dbReference type="HOGENOM" id="CLU_000422_13_4_6"/>
<dbReference type="Proteomes" id="UP000000593">
    <property type="component" value="Chromosome 1"/>
</dbReference>
<dbReference type="GO" id="GO:0016020">
    <property type="term" value="C:membrane"/>
    <property type="evidence" value="ECO:0007669"/>
    <property type="project" value="TreeGrafter"/>
</dbReference>
<dbReference type="GO" id="GO:0009325">
    <property type="term" value="C:nitrate reductase complex"/>
    <property type="evidence" value="ECO:0007669"/>
    <property type="project" value="TreeGrafter"/>
</dbReference>
<dbReference type="GO" id="GO:0042597">
    <property type="term" value="C:periplasmic space"/>
    <property type="evidence" value="ECO:0007669"/>
    <property type="project" value="UniProtKB-SubCell"/>
</dbReference>
<dbReference type="GO" id="GO:0051539">
    <property type="term" value="F:4 iron, 4 sulfur cluster binding"/>
    <property type="evidence" value="ECO:0007669"/>
    <property type="project" value="UniProtKB-KW"/>
</dbReference>
<dbReference type="GO" id="GO:0009055">
    <property type="term" value="F:electron transfer activity"/>
    <property type="evidence" value="ECO:0007669"/>
    <property type="project" value="UniProtKB-UniRule"/>
</dbReference>
<dbReference type="GO" id="GO:0005506">
    <property type="term" value="F:iron ion binding"/>
    <property type="evidence" value="ECO:0007669"/>
    <property type="project" value="UniProtKB-UniRule"/>
</dbReference>
<dbReference type="GO" id="GO:0030151">
    <property type="term" value="F:molybdenum ion binding"/>
    <property type="evidence" value="ECO:0007669"/>
    <property type="project" value="InterPro"/>
</dbReference>
<dbReference type="GO" id="GO:0043546">
    <property type="term" value="F:molybdopterin cofactor binding"/>
    <property type="evidence" value="ECO:0007669"/>
    <property type="project" value="InterPro"/>
</dbReference>
<dbReference type="GO" id="GO:0050140">
    <property type="term" value="F:nitrate reductase (cytochrome) activity"/>
    <property type="evidence" value="ECO:0007669"/>
    <property type="project" value="UniProtKB-EC"/>
</dbReference>
<dbReference type="GO" id="GO:0045333">
    <property type="term" value="P:cellular respiration"/>
    <property type="evidence" value="ECO:0007669"/>
    <property type="project" value="UniProtKB-ARBA"/>
</dbReference>
<dbReference type="GO" id="GO:0006777">
    <property type="term" value="P:Mo-molybdopterin cofactor biosynthetic process"/>
    <property type="evidence" value="ECO:0007669"/>
    <property type="project" value="UniProtKB-UniRule"/>
</dbReference>
<dbReference type="GO" id="GO:0042128">
    <property type="term" value="P:nitrate assimilation"/>
    <property type="evidence" value="ECO:0007669"/>
    <property type="project" value="UniProtKB-UniRule"/>
</dbReference>
<dbReference type="CDD" id="cd02791">
    <property type="entry name" value="MopB_CT_Nitrate-R-NapA-like"/>
    <property type="match status" value="1"/>
</dbReference>
<dbReference type="CDD" id="cd02754">
    <property type="entry name" value="MopB_Nitrate-R-NapA-like"/>
    <property type="match status" value="1"/>
</dbReference>
<dbReference type="FunFam" id="2.40.40.20:FF:000005">
    <property type="entry name" value="Periplasmic nitrate reductase"/>
    <property type="match status" value="1"/>
</dbReference>
<dbReference type="Gene3D" id="2.40.40.20">
    <property type="match status" value="1"/>
</dbReference>
<dbReference type="Gene3D" id="3.30.200.210">
    <property type="match status" value="1"/>
</dbReference>
<dbReference type="Gene3D" id="3.40.50.740">
    <property type="match status" value="1"/>
</dbReference>
<dbReference type="Gene3D" id="3.40.228.10">
    <property type="entry name" value="Dimethylsulfoxide Reductase, domain 2"/>
    <property type="match status" value="1"/>
</dbReference>
<dbReference type="HAMAP" id="MF_01630">
    <property type="entry name" value="Nitrate_reduct_NapA"/>
    <property type="match status" value="1"/>
</dbReference>
<dbReference type="InterPro" id="IPR009010">
    <property type="entry name" value="Asp_de-COase-like_dom_sf"/>
</dbReference>
<dbReference type="InterPro" id="IPR041957">
    <property type="entry name" value="CT_Nitrate-R-NapA-like"/>
</dbReference>
<dbReference type="InterPro" id="IPR006657">
    <property type="entry name" value="MoPterin_dinucl-bd_dom"/>
</dbReference>
<dbReference type="InterPro" id="IPR006656">
    <property type="entry name" value="Mopterin_OxRdtase"/>
</dbReference>
<dbReference type="InterPro" id="IPR006963">
    <property type="entry name" value="Mopterin_OxRdtase_4Fe-4S_dom"/>
</dbReference>
<dbReference type="InterPro" id="IPR027467">
    <property type="entry name" value="MopterinOxRdtase_cofactor_BS"/>
</dbReference>
<dbReference type="InterPro" id="IPR010051">
    <property type="entry name" value="Periplasm_NO3_reductase_lsu"/>
</dbReference>
<dbReference type="InterPro" id="IPR050123">
    <property type="entry name" value="Prok_molybdopt-oxidoreductase"/>
</dbReference>
<dbReference type="InterPro" id="IPR006311">
    <property type="entry name" value="TAT_signal"/>
</dbReference>
<dbReference type="NCBIfam" id="TIGR01706">
    <property type="entry name" value="NAPA"/>
    <property type="match status" value="1"/>
</dbReference>
<dbReference type="NCBIfam" id="NF010055">
    <property type="entry name" value="PRK13532.1"/>
    <property type="match status" value="1"/>
</dbReference>
<dbReference type="PANTHER" id="PTHR43105:SF11">
    <property type="entry name" value="PERIPLASMIC NITRATE REDUCTASE"/>
    <property type="match status" value="1"/>
</dbReference>
<dbReference type="PANTHER" id="PTHR43105">
    <property type="entry name" value="RESPIRATORY NITRATE REDUCTASE"/>
    <property type="match status" value="1"/>
</dbReference>
<dbReference type="Pfam" id="PF04879">
    <property type="entry name" value="Molybdop_Fe4S4"/>
    <property type="match status" value="1"/>
</dbReference>
<dbReference type="Pfam" id="PF00384">
    <property type="entry name" value="Molybdopterin"/>
    <property type="match status" value="1"/>
</dbReference>
<dbReference type="Pfam" id="PF01568">
    <property type="entry name" value="Molydop_binding"/>
    <property type="match status" value="1"/>
</dbReference>
<dbReference type="SMART" id="SM00926">
    <property type="entry name" value="Molybdop_Fe4S4"/>
    <property type="match status" value="1"/>
</dbReference>
<dbReference type="SUPFAM" id="SSF50692">
    <property type="entry name" value="ADC-like"/>
    <property type="match status" value="1"/>
</dbReference>
<dbReference type="SUPFAM" id="SSF53706">
    <property type="entry name" value="Formate dehydrogenase/DMSO reductase, domains 1-3"/>
    <property type="match status" value="1"/>
</dbReference>
<dbReference type="PROSITE" id="PS51669">
    <property type="entry name" value="4FE4S_MOW_BIS_MGD"/>
    <property type="match status" value="1"/>
</dbReference>
<dbReference type="PROSITE" id="PS00551">
    <property type="entry name" value="MOLYBDOPTERIN_PROK_1"/>
    <property type="match status" value="1"/>
</dbReference>
<dbReference type="PROSITE" id="PS51318">
    <property type="entry name" value="TAT"/>
    <property type="match status" value="1"/>
</dbReference>
<gene>
    <name evidence="1" type="primary">napA1</name>
    <name type="ordered locus">PBPRA0853</name>
</gene>
<proteinExistence type="inferred from homology"/>
<reference key="1">
    <citation type="journal article" date="2005" name="Science">
        <title>Life at depth: Photobacterium profundum genome sequence and expression analysis.</title>
        <authorList>
            <person name="Vezzi A."/>
            <person name="Campanaro S."/>
            <person name="D'Angelo M."/>
            <person name="Simonato F."/>
            <person name="Vitulo N."/>
            <person name="Lauro F.M."/>
            <person name="Cestaro A."/>
            <person name="Malacrida G."/>
            <person name="Simionati B."/>
            <person name="Cannata N."/>
            <person name="Romualdi C."/>
            <person name="Bartlett D.H."/>
            <person name="Valle G."/>
        </authorList>
    </citation>
    <scope>NUCLEOTIDE SEQUENCE [LARGE SCALE GENOMIC DNA]</scope>
    <source>
        <strain>ATCC BAA-1253 / SS9</strain>
    </source>
</reference>